<evidence type="ECO:0000250" key="1"/>
<evidence type="ECO:0000250" key="2">
    <source>
        <dbReference type="UniProtKB" id="P16284"/>
    </source>
</evidence>
<evidence type="ECO:0000250" key="3">
    <source>
        <dbReference type="UniProtKB" id="Q08481"/>
    </source>
</evidence>
<evidence type="ECO:0000255" key="4"/>
<evidence type="ECO:0000255" key="5">
    <source>
        <dbReference type="PROSITE-ProRule" id="PRU00114"/>
    </source>
</evidence>
<evidence type="ECO:0000269" key="6">
    <source>
    </source>
</evidence>
<gene>
    <name type="primary">PECAM1</name>
</gene>
<proteinExistence type="evidence at protein level"/>
<accession>P51866</accession>
<feature type="signal peptide" evidence="1">
    <location>
        <begin position="1"/>
        <end position="27"/>
    </location>
</feature>
<feature type="chain" id="PRO_0000014894" description="Platelet endothelial cell adhesion molecule">
    <location>
        <begin position="28"/>
        <end position="739"/>
    </location>
</feature>
<feature type="topological domain" description="Extracellular" evidence="4">
    <location>
        <begin position="28"/>
        <end position="599"/>
    </location>
</feature>
<feature type="transmembrane region" description="Helical" evidence="4">
    <location>
        <begin position="600"/>
        <end position="618"/>
    </location>
</feature>
<feature type="topological domain" description="Cytoplasmic" evidence="4">
    <location>
        <begin position="619"/>
        <end position="739"/>
    </location>
</feature>
<feature type="domain" description="Ig-like C2-type 1">
    <location>
        <begin position="35"/>
        <end position="120"/>
    </location>
</feature>
<feature type="domain" description="Ig-like C2-type 2">
    <location>
        <begin position="145"/>
        <end position="213"/>
    </location>
</feature>
<feature type="domain" description="Ig-like C2-type 3">
    <location>
        <begin position="236"/>
        <end position="315"/>
    </location>
</feature>
<feature type="domain" description="Ig-like C2-type 4">
    <location>
        <begin position="328"/>
        <end position="403"/>
    </location>
</feature>
<feature type="domain" description="Ig-like C2-type 5">
    <location>
        <begin position="424"/>
        <end position="493"/>
    </location>
</feature>
<feature type="domain" description="Ig-like C2-type 6">
    <location>
        <begin position="499"/>
        <end position="590"/>
    </location>
</feature>
<feature type="region of interest" description="Membrane-bound segment which detaches upon phosphorylation" evidence="2">
    <location>
        <begin position="708"/>
        <end position="730"/>
    </location>
</feature>
<feature type="region of interest" description="May play a role in cytoprotective signaling" evidence="1">
    <location>
        <begin position="722"/>
        <end position="739"/>
    </location>
</feature>
<feature type="short sequence motif" description="ITIM motif 1" evidence="2">
    <location>
        <begin position="687"/>
        <end position="692"/>
    </location>
</feature>
<feature type="short sequence motif" description="ITIM motif 2" evidence="2">
    <location>
        <begin position="712"/>
        <end position="717"/>
    </location>
</feature>
<feature type="modified residue" description="Phosphotyrosine; by FER" evidence="6">
    <location>
        <position position="689"/>
    </location>
</feature>
<feature type="modified residue" description="Phosphotyrosine; by FER" evidence="6">
    <location>
        <position position="714"/>
    </location>
</feature>
<feature type="modified residue" description="Phosphoserine" evidence="2">
    <location>
        <position position="730"/>
    </location>
</feature>
<feature type="modified residue" description="Phosphoserine" evidence="2">
    <location>
        <position position="735"/>
    </location>
</feature>
<feature type="lipid moiety-binding region" description="S-palmitoyl cysteine" evidence="1">
    <location>
        <position position="620"/>
    </location>
</feature>
<feature type="glycosylation site" description="N-linked (GlcNAc...) asparagine" evidence="4">
    <location>
        <position position="52"/>
    </location>
</feature>
<feature type="glycosylation site" description="N-linked (GlcNAc...) asparagine" evidence="4">
    <location>
        <position position="84"/>
    </location>
</feature>
<feature type="glycosylation site" description="N-linked (GlcNAc...) asparagine" evidence="4">
    <location>
        <position position="151"/>
    </location>
</feature>
<feature type="glycosylation site" description="N-linked (GlcNAc...) asparagine" evidence="4">
    <location>
        <position position="301"/>
    </location>
</feature>
<feature type="glycosylation site" description="N-linked (GlcNAc...) asparagine" evidence="4">
    <location>
        <position position="320"/>
    </location>
</feature>
<feature type="glycosylation site" description="N-linked (GlcNAc...) asparagine" evidence="4">
    <location>
        <position position="356"/>
    </location>
</feature>
<feature type="glycosylation site" description="N-linked (GlcNAc...) asparagine" evidence="4">
    <location>
        <position position="371"/>
    </location>
</feature>
<feature type="glycosylation site" description="N-linked (GlcNAc...) asparagine" evidence="4">
    <location>
        <position position="435"/>
    </location>
</feature>
<feature type="glycosylation site" description="N-linked (GlcNAc...) asparagine" evidence="4">
    <location>
        <position position="446"/>
    </location>
</feature>
<feature type="glycosylation site" description="N-linked (GlcNAc...) asparagine" evidence="4">
    <location>
        <position position="453"/>
    </location>
</feature>
<feature type="glycosylation site" description="N-linked (GlcNAc...) asparagine" evidence="4">
    <location>
        <position position="550"/>
    </location>
</feature>
<feature type="glycosylation site" description="N-linked (GlcNAc...) asparagine" evidence="4">
    <location>
        <position position="578"/>
    </location>
</feature>
<feature type="disulfide bond" evidence="5">
    <location>
        <begin position="57"/>
        <end position="109"/>
    </location>
</feature>
<feature type="disulfide bond" evidence="5">
    <location>
        <begin position="152"/>
        <end position="206"/>
    </location>
</feature>
<feature type="disulfide bond" evidence="5">
    <location>
        <begin position="256"/>
        <end position="304"/>
    </location>
</feature>
<feature type="disulfide bond" evidence="5">
    <location>
        <begin position="347"/>
        <end position="386"/>
    </location>
</feature>
<feature type="disulfide bond" evidence="5">
    <location>
        <begin position="431"/>
        <end position="476"/>
    </location>
</feature>
<feature type="disulfide bond" evidence="5">
    <location>
        <begin position="522"/>
        <end position="571"/>
    </location>
</feature>
<feature type="mutagenesis site" description="Strongly reduced phosphorylation by FER. Abolishes phosphorylation by FER; when associated with F-714." evidence="6">
    <original>Y</original>
    <variation>F</variation>
    <location>
        <position position="689"/>
    </location>
</feature>
<feature type="mutagenesis site" description="Reduced phosphorylation by FER. Abolishes phosphorylation by FER; when associated with F-689." evidence="6">
    <original>Y</original>
    <variation>F</variation>
    <location>
        <position position="714"/>
    </location>
</feature>
<sequence length="739" mass="82586">MQLRWTQRGMMWLGALLTLLLCSSLKGQENSFTINSIHMQILPHSTVQNGENLTLQCLVDVSTTSRVKPLHQVLFYKDDVLLHNVSSRRNTESYLIPHVRVCDSGRYKCNVILNNKEKTTPEYEVWVKGVSDPRVTLDKKEVIEGGVVVVNCSVPEEKAPVHFTIEKFELNIRGAKKKREKTSQNQNFVTLEFTVEEQDRTIRFQCQAKIFSGSNVESSRPIQSDLVTVRESFSNPKFHIIPEGKVMEGDDLQVKCTVQVTHQAQSFPEIIIQKDREIVAHNSLSSEAVYSVMATTEHNGNYTCKVEASRISKVSSVVVNVTELFSKPKLESSATHLDQGEDLNLLCSIPGAPPANFTIQKGGMTVSQTQNFTKRVSEWDSGLYTCVAGVGRVFKRSNTVQITVCEMLSKPSIFHDSRSEVIKGQTIEVSCQSVNGTAPIFYQLSNTSKPVANQSVGSNKPAIFRVKPTKDVEYCCSADNCHSHSKMFSEVLRVKVIAPVDEAQLVVLKGEVEPGEPIVFYCSVNEGSFPITYKFYKEKESKPFYQDTINATQIMWHKTTASKEYEGQYYCTASNRANLSKHVIQSNTLTVRVYLPLEKGLIAVVVIGVIIVTLVLGAKCYFLKKAKAKQMPVEMSRPAVPLLNSNNEKTLSDAGTEADRHYGYNEDVGNHAMKPLNENKEPLTLDVEYTEVEVTSPEPHQGLGTKGTETETVYSEIRKADPDFVENRYSRTEGSLDGS</sequence>
<keyword id="KW-0130">Cell adhesion</keyword>
<keyword id="KW-0965">Cell junction</keyword>
<keyword id="KW-1003">Cell membrane</keyword>
<keyword id="KW-1015">Disulfide bond</keyword>
<keyword id="KW-0325">Glycoprotein</keyword>
<keyword id="KW-0393">Immunoglobulin domain</keyword>
<keyword id="KW-0449">Lipoprotein</keyword>
<keyword id="KW-0472">Membrane</keyword>
<keyword id="KW-0564">Palmitate</keyword>
<keyword id="KW-0597">Phosphoprotein</keyword>
<keyword id="KW-1185">Reference proteome</keyword>
<keyword id="KW-0677">Repeat</keyword>
<keyword id="KW-0732">Signal</keyword>
<keyword id="KW-0812">Transmembrane</keyword>
<keyword id="KW-1133">Transmembrane helix</keyword>
<organism>
    <name type="scientific">Bos taurus</name>
    <name type="common">Bovine</name>
    <dbReference type="NCBI Taxonomy" id="9913"/>
    <lineage>
        <taxon>Eukaryota</taxon>
        <taxon>Metazoa</taxon>
        <taxon>Chordata</taxon>
        <taxon>Craniata</taxon>
        <taxon>Vertebrata</taxon>
        <taxon>Euteleostomi</taxon>
        <taxon>Mammalia</taxon>
        <taxon>Eutheria</taxon>
        <taxon>Laurasiatheria</taxon>
        <taxon>Artiodactyla</taxon>
        <taxon>Ruminantia</taxon>
        <taxon>Pecora</taxon>
        <taxon>Bovidae</taxon>
        <taxon>Bovinae</taxon>
        <taxon>Bos</taxon>
    </lineage>
</organism>
<reference key="1">
    <citation type="journal article" date="1996" name="J. Immunol.">
        <title>Vascular endothelial platelet endothelial adhesion molecule-1 (PECAM-1) expression is decreased by TNF-alpha and IFN-gamma. Evidence for cytokine-induced destabilization of messenger ribonucleic acid transcripts in bovine endothelial cells.</title>
        <authorList>
            <person name="Stewart R.J."/>
            <person name="Kashour T.S."/>
            <person name="Marsden P.A."/>
        </authorList>
    </citation>
    <scope>NUCLEOTIDE SEQUENCE [MRNA]</scope>
    <source>
        <tissue>Kidney</tissue>
    </source>
</reference>
<reference key="2">
    <citation type="journal article" date="2003" name="Mol. Biol. Cell">
        <title>Identification of Fer tyrosine kinase localized on microtubules as a platelet endothelial cell adhesion molecule-1 phosphorylating kinase in vascular endothelial cells.</title>
        <authorList>
            <person name="Kogata N."/>
            <person name="Masuda M."/>
            <person name="Kamioka Y."/>
            <person name="Yamagishi A."/>
            <person name="Endo A."/>
            <person name="Okada M."/>
            <person name="Mochizuki N."/>
        </authorList>
    </citation>
    <scope>PHOSPHORYLATION AT TYR-689 AND TYR-714</scope>
    <scope>MUTAGENESIS OF TYR-689 AND TYR-714</scope>
    <scope>INTERACTION WITH FER AND PTPN11</scope>
</reference>
<dbReference type="EMBL" id="U35433">
    <property type="protein sequence ID" value="AAC48566.1"/>
    <property type="molecule type" value="mRNA"/>
</dbReference>
<dbReference type="SMR" id="P51866"/>
<dbReference type="FunCoup" id="P51866">
    <property type="interactions" value="430"/>
</dbReference>
<dbReference type="STRING" id="9913.ENSBTAP00000068562"/>
<dbReference type="GlyCosmos" id="P51866">
    <property type="glycosylation" value="12 sites, No reported glycans"/>
</dbReference>
<dbReference type="GlyGen" id="P51866">
    <property type="glycosylation" value="12 sites"/>
</dbReference>
<dbReference type="iPTMnet" id="P51866"/>
<dbReference type="PaxDb" id="9913-ENSBTAP00000040327"/>
<dbReference type="eggNOG" id="ENOG502QW63">
    <property type="taxonomic scope" value="Eukaryota"/>
</dbReference>
<dbReference type="InParanoid" id="P51866"/>
<dbReference type="OrthoDB" id="9950534at2759"/>
<dbReference type="Proteomes" id="UP000009136">
    <property type="component" value="Unplaced"/>
</dbReference>
<dbReference type="GO" id="GO:0070161">
    <property type="term" value="C:anchoring junction"/>
    <property type="evidence" value="ECO:0007669"/>
    <property type="project" value="UniProtKB-SubCell"/>
</dbReference>
<dbReference type="GO" id="GO:0009897">
    <property type="term" value="C:external side of plasma membrane"/>
    <property type="evidence" value="ECO:0000318"/>
    <property type="project" value="GO_Central"/>
</dbReference>
<dbReference type="GO" id="GO:0045121">
    <property type="term" value="C:membrane raft"/>
    <property type="evidence" value="ECO:0007669"/>
    <property type="project" value="UniProtKB-SubCell"/>
</dbReference>
<dbReference type="GO" id="GO:0005886">
    <property type="term" value="C:plasma membrane"/>
    <property type="evidence" value="ECO:0000304"/>
    <property type="project" value="Reactome"/>
</dbReference>
<dbReference type="GO" id="GO:0004888">
    <property type="term" value="F:transmembrane signaling receptor activity"/>
    <property type="evidence" value="ECO:0000318"/>
    <property type="project" value="GO_Central"/>
</dbReference>
<dbReference type="GO" id="GO:0007166">
    <property type="term" value="P:cell surface receptor signaling pathway"/>
    <property type="evidence" value="ECO:0000315"/>
    <property type="project" value="ARUK-UCL"/>
</dbReference>
<dbReference type="GO" id="GO:0098742">
    <property type="term" value="P:cell-cell adhesion via plasma-membrane adhesion molecules"/>
    <property type="evidence" value="ECO:0000318"/>
    <property type="project" value="GO_Central"/>
</dbReference>
<dbReference type="GO" id="GO:0071260">
    <property type="term" value="P:cellular response to mechanical stimulus"/>
    <property type="evidence" value="ECO:0000315"/>
    <property type="project" value="ARUK-UCL"/>
</dbReference>
<dbReference type="GO" id="GO:0006955">
    <property type="term" value="P:immune response"/>
    <property type="evidence" value="ECO:0000318"/>
    <property type="project" value="GO_Central"/>
</dbReference>
<dbReference type="GO" id="GO:0043410">
    <property type="term" value="P:positive regulation of MAPK cascade"/>
    <property type="evidence" value="ECO:0000315"/>
    <property type="project" value="ARUK-UCL"/>
</dbReference>
<dbReference type="Gene3D" id="2.60.40.10">
    <property type="entry name" value="Immunoglobulins"/>
    <property type="match status" value="6"/>
</dbReference>
<dbReference type="InterPro" id="IPR007110">
    <property type="entry name" value="Ig-like_dom"/>
</dbReference>
<dbReference type="InterPro" id="IPR036179">
    <property type="entry name" value="Ig-like_dom_sf"/>
</dbReference>
<dbReference type="InterPro" id="IPR013783">
    <property type="entry name" value="Ig-like_fold"/>
</dbReference>
<dbReference type="InterPro" id="IPR050488">
    <property type="entry name" value="Ig_Fc_receptor"/>
</dbReference>
<dbReference type="InterPro" id="IPR003599">
    <property type="entry name" value="Ig_sub"/>
</dbReference>
<dbReference type="InterPro" id="IPR040878">
    <property type="entry name" value="IL-40-like_Ig"/>
</dbReference>
<dbReference type="PANTHER" id="PTHR11481">
    <property type="entry name" value="IMMUNOGLOBULIN FC RECEPTOR"/>
    <property type="match status" value="1"/>
</dbReference>
<dbReference type="PANTHER" id="PTHR11481:SF5">
    <property type="entry name" value="PLATELET ENDOTHELIAL CELL ADHESION MOLECULE"/>
    <property type="match status" value="1"/>
</dbReference>
<dbReference type="Pfam" id="PF13895">
    <property type="entry name" value="Ig_2"/>
    <property type="match status" value="3"/>
</dbReference>
<dbReference type="Pfam" id="PF17736">
    <property type="entry name" value="Ig_C17orf99"/>
    <property type="match status" value="1"/>
</dbReference>
<dbReference type="SMART" id="SM00409">
    <property type="entry name" value="IG"/>
    <property type="match status" value="5"/>
</dbReference>
<dbReference type="SUPFAM" id="SSF48726">
    <property type="entry name" value="Immunoglobulin"/>
    <property type="match status" value="5"/>
</dbReference>
<dbReference type="PROSITE" id="PS50835">
    <property type="entry name" value="IG_LIKE"/>
    <property type="match status" value="4"/>
</dbReference>
<name>PECA1_BOVIN</name>
<comment type="function">
    <text evidence="2 3">Cell adhesion molecule which is required for leukocyte transendothelial migration (TEM) under most inflammatory conditions. Tyr-689 plays a critical role in TEM and is required for efficient trafficking of PECAM1 to and from the lateral border recycling compartment (LBRC) and is also essential for the LBRC membrane to be targeted around migrating leukocytes. Trans-homophilic interaction may play a role in endothelial cell-cell adhesion via cell junctions. Heterophilic interaction with CD177 plays a role in transendothelial migration of neutrophils. Homophilic ligation of PECAM1 prevents macrophage-mediated phagocytosis of neighboring viable leukocytes by transmitting a detachment signal. Promotes macrophage-mediated phagocytosis of apoptotic leukocytes by tethering them to the phagocytic cells; PECAM1-mediated detachment signal appears to be disabled in apoptotic leukocytes. Modulates bradykinin receptor BDKRB2 activation. Regulates bradykinin- and hyperosmotic shock-induced ERK1/2 activation in endothelial cells. Induces susceptibility to atherosclerosis.</text>
</comment>
<comment type="subunit">
    <text evidence="2 6">Trans-homodimer (via Ig-like C2-type 1 and Ig-like C2-type 2 domains); trans-homodimerization is required for cell-cell interaction (By similarity). Forms a complex with BDKRB2 and GNAQ (By similarity). Interacts with BDKRB2 and GNAQ (By similarity). Interacts with PTPN11; Tyr-714 is critical for PTPN11 recruitment (PubMed:12972546). Interacts with FER (PubMed:12972546). Interacts with CD177; the interaction is Ca(2+)-dependent; the interaction is direct (By similarity).</text>
</comment>
<comment type="subcellular location">
    <subcellularLocation>
        <location evidence="2">Cell membrane</location>
        <topology evidence="2">Single-pass type I membrane protein</topology>
    </subcellularLocation>
    <subcellularLocation>
        <location evidence="2">Membrane raft</location>
    </subcellularLocation>
    <subcellularLocation>
        <location evidence="2">Cell junction</location>
    </subcellularLocation>
    <text evidence="2">Localizes to the lateral border recycling compartment (LBRC) and recycles from the LBRC to the junction in resting endothelial cells. Cell surface expression on neutrophils is down-regulated upon fMLP or CXCL8/IL8-mediated stimulation.</text>
</comment>
<comment type="domain">
    <text evidence="1">The Ig-like C2-type domains 2 and 3 contribute to formation of the complex with BDKRB2 and in regulation of its activity.</text>
</comment>
<comment type="PTM">
    <text evidence="2 6">Phosphorylated on Ser and Tyr residues by src kinases after cellular activation (PubMed:12972546). Upon activation, phosphorylated on Ser-730 which probably initiates the dissociation of the membrane-interaction segment (residues 708-730) from the cell membrane allowing the sequential phosphorylation of Tyr-714 and Tyr-689 (By similarity). Constitutively phosphorylated on Ser-735 in resting platelets (By similarity). Phosphorylated on tyrosine residues by FER and FES in response to FCER1 activation (PubMed:12972546). In endothelial cells Fyn mediates mechanical-force (stretch or pull) induced tyrosine phosphorylation (By similarity).</text>
</comment>
<comment type="PTM">
    <text evidence="2">Palmitoylation by ZDHHC21 is necessary for cell surface expression in endothelial cells and enrichment in membrane rafts.</text>
</comment>
<protein>
    <recommendedName>
        <fullName>Platelet endothelial cell adhesion molecule</fullName>
        <shortName>PECAM-1</shortName>
    </recommendedName>
    <cdAntigenName>CD31</cdAntigenName>
</protein>